<proteinExistence type="inferred from homology"/>
<comment type="similarity">
    <text evidence="1">Belongs to the UPF0482 family.</text>
</comment>
<reference key="1">
    <citation type="submission" date="2009-07" db="EMBL/GenBank/DDBJ databases">
        <title>Complete sequence of Pectobacterium carotovorum subsp. carotovorum PC1.</title>
        <authorList>
            <consortium name="US DOE Joint Genome Institute"/>
            <person name="Lucas S."/>
            <person name="Copeland A."/>
            <person name="Lapidus A."/>
            <person name="Glavina del Rio T."/>
            <person name="Tice H."/>
            <person name="Bruce D."/>
            <person name="Goodwin L."/>
            <person name="Pitluck S."/>
            <person name="Munk A.C."/>
            <person name="Brettin T."/>
            <person name="Detter J.C."/>
            <person name="Han C."/>
            <person name="Tapia R."/>
            <person name="Larimer F."/>
            <person name="Land M."/>
            <person name="Hauser L."/>
            <person name="Kyrpides N."/>
            <person name="Mikhailova N."/>
            <person name="Balakrishnan V."/>
            <person name="Glasner J."/>
            <person name="Perna N.T."/>
        </authorList>
    </citation>
    <scope>NUCLEOTIDE SEQUENCE [LARGE SCALE GENOMIC DNA]</scope>
    <source>
        <strain>PC1</strain>
    </source>
</reference>
<protein>
    <recommendedName>
        <fullName evidence="1">UPF0482 protein PC1_2049</fullName>
    </recommendedName>
</protein>
<gene>
    <name type="ordered locus">PC1_2049</name>
</gene>
<feature type="signal peptide" evidence="1">
    <location>
        <begin position="1"/>
        <end position="31"/>
    </location>
</feature>
<feature type="chain" id="PRO_5000486232" description="UPF0482 protein PC1_2049">
    <location>
        <begin position="32"/>
        <end position="116"/>
    </location>
</feature>
<dbReference type="EMBL" id="CP001657">
    <property type="protein sequence ID" value="ACT13090.1"/>
    <property type="molecule type" value="Genomic_DNA"/>
</dbReference>
<dbReference type="RefSeq" id="WP_015840283.1">
    <property type="nucleotide sequence ID" value="NC_012917.1"/>
</dbReference>
<dbReference type="STRING" id="561230.PC1_2049"/>
<dbReference type="KEGG" id="pct:PC1_2049"/>
<dbReference type="eggNOG" id="ENOG5032SRB">
    <property type="taxonomic scope" value="Bacteria"/>
</dbReference>
<dbReference type="HOGENOM" id="CLU_167574_0_0_6"/>
<dbReference type="OrthoDB" id="6455281at2"/>
<dbReference type="Proteomes" id="UP000002736">
    <property type="component" value="Chromosome"/>
</dbReference>
<dbReference type="HAMAP" id="MF_01581">
    <property type="entry name" value="UPF0482"/>
    <property type="match status" value="1"/>
</dbReference>
<dbReference type="InterPro" id="IPR009700">
    <property type="entry name" value="DUF1283"/>
</dbReference>
<dbReference type="NCBIfam" id="NF010180">
    <property type="entry name" value="PRK13659.1"/>
    <property type="match status" value="1"/>
</dbReference>
<dbReference type="Pfam" id="PF06932">
    <property type="entry name" value="DUF1283"/>
    <property type="match status" value="1"/>
</dbReference>
<keyword id="KW-0732">Signal</keyword>
<sequence>MNHYSFSSLIRAFIPLSLVIVSAAWQPAALADTRHIIVDSGDSTLSKEAARQSKEQWDSTRSLRNKVNNRVEKEFDKTEKAIDGREKCNASYNVNAYWENTTDRCLDRRTGRPVTP</sequence>
<name>Y2049_PECCP</name>
<evidence type="ECO:0000255" key="1">
    <source>
        <dbReference type="HAMAP-Rule" id="MF_01581"/>
    </source>
</evidence>
<accession>C6DH41</accession>
<organism>
    <name type="scientific">Pectobacterium carotovorum subsp. carotovorum (strain PC1)</name>
    <dbReference type="NCBI Taxonomy" id="561230"/>
    <lineage>
        <taxon>Bacteria</taxon>
        <taxon>Pseudomonadati</taxon>
        <taxon>Pseudomonadota</taxon>
        <taxon>Gammaproteobacteria</taxon>
        <taxon>Enterobacterales</taxon>
        <taxon>Pectobacteriaceae</taxon>
        <taxon>Pectobacterium</taxon>
    </lineage>
</organism>